<comment type="function">
    <text evidence="1">May play a role in DNA repair. It seems to be involved in an RecBC-independent recombinational process of DNA repair. It may act with RecF and RecO.</text>
</comment>
<comment type="similarity">
    <text evidence="1">Belongs to the RecR family.</text>
</comment>
<proteinExistence type="inferred from homology"/>
<evidence type="ECO:0000255" key="1">
    <source>
        <dbReference type="HAMAP-Rule" id="MF_00017"/>
    </source>
</evidence>
<feature type="chain" id="PRO_1000001557" description="Recombination protein RecR">
    <location>
        <begin position="1"/>
        <end position="199"/>
    </location>
</feature>
<feature type="domain" description="Toprim" evidence="1">
    <location>
        <begin position="80"/>
        <end position="176"/>
    </location>
</feature>
<feature type="zinc finger region" description="C4-type" evidence="1">
    <location>
        <begin position="57"/>
        <end position="72"/>
    </location>
</feature>
<protein>
    <recommendedName>
        <fullName evidence="1">Recombination protein RecR</fullName>
    </recommendedName>
</protein>
<keyword id="KW-0227">DNA damage</keyword>
<keyword id="KW-0233">DNA recombination</keyword>
<keyword id="KW-0234">DNA repair</keyword>
<keyword id="KW-0479">Metal-binding</keyword>
<keyword id="KW-0862">Zinc</keyword>
<keyword id="KW-0863">Zinc-finger</keyword>
<accession>Q048W6</accession>
<reference key="1">
    <citation type="journal article" date="2006" name="Proc. Natl. Acad. Sci. U.S.A.">
        <title>Comparative genomics of the lactic acid bacteria.</title>
        <authorList>
            <person name="Makarova K.S."/>
            <person name="Slesarev A."/>
            <person name="Wolf Y.I."/>
            <person name="Sorokin A."/>
            <person name="Mirkin B."/>
            <person name="Koonin E.V."/>
            <person name="Pavlov A."/>
            <person name="Pavlova N."/>
            <person name="Karamychev V."/>
            <person name="Polouchine N."/>
            <person name="Shakhova V."/>
            <person name="Grigoriev I."/>
            <person name="Lou Y."/>
            <person name="Rohksar D."/>
            <person name="Lucas S."/>
            <person name="Huang K."/>
            <person name="Goodstein D.M."/>
            <person name="Hawkins T."/>
            <person name="Plengvidhya V."/>
            <person name="Welker D."/>
            <person name="Hughes J."/>
            <person name="Goh Y."/>
            <person name="Benson A."/>
            <person name="Baldwin K."/>
            <person name="Lee J.-H."/>
            <person name="Diaz-Muniz I."/>
            <person name="Dosti B."/>
            <person name="Smeianov V."/>
            <person name="Wechter W."/>
            <person name="Barabote R."/>
            <person name="Lorca G."/>
            <person name="Altermann E."/>
            <person name="Barrangou R."/>
            <person name="Ganesan B."/>
            <person name="Xie Y."/>
            <person name="Rawsthorne H."/>
            <person name="Tamir D."/>
            <person name="Parker C."/>
            <person name="Breidt F."/>
            <person name="Broadbent J.R."/>
            <person name="Hutkins R."/>
            <person name="O'Sullivan D."/>
            <person name="Steele J."/>
            <person name="Unlu G."/>
            <person name="Saier M.H. Jr."/>
            <person name="Klaenhammer T."/>
            <person name="Richardson P."/>
            <person name="Kozyavkin S."/>
            <person name="Weimer B.C."/>
            <person name="Mills D.A."/>
        </authorList>
    </citation>
    <scope>NUCLEOTIDE SEQUENCE [LARGE SCALE GENOMIC DNA]</scope>
    <source>
        <strain>ATCC BAA-365 / Lb-18</strain>
    </source>
</reference>
<name>RECR_LACDB</name>
<dbReference type="EMBL" id="CP000412">
    <property type="protein sequence ID" value="ABJ59006.1"/>
    <property type="molecule type" value="Genomic_DNA"/>
</dbReference>
<dbReference type="RefSeq" id="WP_003621968.1">
    <property type="nucleotide sequence ID" value="NC_008529.1"/>
</dbReference>
<dbReference type="SMR" id="Q048W6"/>
<dbReference type="KEGG" id="lbu:LBUL_1513"/>
<dbReference type="HOGENOM" id="CLU_060739_1_0_9"/>
<dbReference type="BioCyc" id="LDEL321956:LBUL_RS07150-MONOMER"/>
<dbReference type="GO" id="GO:0003677">
    <property type="term" value="F:DNA binding"/>
    <property type="evidence" value="ECO:0007669"/>
    <property type="project" value="UniProtKB-UniRule"/>
</dbReference>
<dbReference type="GO" id="GO:0008270">
    <property type="term" value="F:zinc ion binding"/>
    <property type="evidence" value="ECO:0007669"/>
    <property type="project" value="UniProtKB-KW"/>
</dbReference>
<dbReference type="GO" id="GO:0006310">
    <property type="term" value="P:DNA recombination"/>
    <property type="evidence" value="ECO:0007669"/>
    <property type="project" value="UniProtKB-UniRule"/>
</dbReference>
<dbReference type="GO" id="GO:0006281">
    <property type="term" value="P:DNA repair"/>
    <property type="evidence" value="ECO:0007669"/>
    <property type="project" value="UniProtKB-UniRule"/>
</dbReference>
<dbReference type="CDD" id="cd01025">
    <property type="entry name" value="TOPRIM_recR"/>
    <property type="match status" value="1"/>
</dbReference>
<dbReference type="Gene3D" id="3.30.60.80">
    <property type="match status" value="1"/>
</dbReference>
<dbReference type="Gene3D" id="3.40.1360.10">
    <property type="match status" value="1"/>
</dbReference>
<dbReference type="Gene3D" id="6.10.250.240">
    <property type="match status" value="1"/>
</dbReference>
<dbReference type="Gene3D" id="1.10.8.420">
    <property type="entry name" value="RecR Domain 1"/>
    <property type="match status" value="1"/>
</dbReference>
<dbReference type="HAMAP" id="MF_00017">
    <property type="entry name" value="RecR"/>
    <property type="match status" value="1"/>
</dbReference>
<dbReference type="InterPro" id="IPR000093">
    <property type="entry name" value="DNA_Rcmb_RecR"/>
</dbReference>
<dbReference type="InterPro" id="IPR023627">
    <property type="entry name" value="Rcmb_RecR"/>
</dbReference>
<dbReference type="InterPro" id="IPR015967">
    <property type="entry name" value="Rcmb_RecR_Znf"/>
</dbReference>
<dbReference type="InterPro" id="IPR006171">
    <property type="entry name" value="TOPRIM_dom"/>
</dbReference>
<dbReference type="InterPro" id="IPR034137">
    <property type="entry name" value="TOPRIM_RecR"/>
</dbReference>
<dbReference type="NCBIfam" id="TIGR00615">
    <property type="entry name" value="recR"/>
    <property type="match status" value="1"/>
</dbReference>
<dbReference type="PANTHER" id="PTHR30446">
    <property type="entry name" value="RECOMBINATION PROTEIN RECR"/>
    <property type="match status" value="1"/>
</dbReference>
<dbReference type="PANTHER" id="PTHR30446:SF0">
    <property type="entry name" value="RECOMBINATION PROTEIN RECR"/>
    <property type="match status" value="1"/>
</dbReference>
<dbReference type="Pfam" id="PF21175">
    <property type="entry name" value="RecR_C"/>
    <property type="match status" value="1"/>
</dbReference>
<dbReference type="Pfam" id="PF21176">
    <property type="entry name" value="RecR_HhH"/>
    <property type="match status" value="1"/>
</dbReference>
<dbReference type="Pfam" id="PF02132">
    <property type="entry name" value="RecR_ZnF"/>
    <property type="match status" value="1"/>
</dbReference>
<dbReference type="Pfam" id="PF13662">
    <property type="entry name" value="Toprim_4"/>
    <property type="match status" value="1"/>
</dbReference>
<dbReference type="SMART" id="SM00493">
    <property type="entry name" value="TOPRIM"/>
    <property type="match status" value="1"/>
</dbReference>
<dbReference type="SUPFAM" id="SSF111304">
    <property type="entry name" value="Recombination protein RecR"/>
    <property type="match status" value="1"/>
</dbReference>
<dbReference type="PROSITE" id="PS01300">
    <property type="entry name" value="RECR"/>
    <property type="match status" value="1"/>
</dbReference>
<dbReference type="PROSITE" id="PS50880">
    <property type="entry name" value="TOPRIM"/>
    <property type="match status" value="1"/>
</dbReference>
<gene>
    <name evidence="1" type="primary">recR</name>
    <name type="ordered locus">LBUL_1513</name>
</gene>
<sequence length="199" mass="21858">MQYPLPIARLIDSFMKLPGIGEKTATRLAFYAMDMPKEDVDEFAQALVDVKEKLRQCSVCGNITEQDPCAICSNPVRDRSTIMVVEEAKDVMAFENMGEYDGLYHVLHGVLSPMDGIGPEQINIKSLIVRLQKNDAAKEVILALNSTPEGESTAMYISRLIKPAGLKVTRLAAGLAVGSDIEYANLITLKRAVQGRTEL</sequence>
<organism>
    <name type="scientific">Lactobacillus delbrueckii subsp. bulgaricus (strain ATCC BAA-365 / Lb-18)</name>
    <dbReference type="NCBI Taxonomy" id="321956"/>
    <lineage>
        <taxon>Bacteria</taxon>
        <taxon>Bacillati</taxon>
        <taxon>Bacillota</taxon>
        <taxon>Bacilli</taxon>
        <taxon>Lactobacillales</taxon>
        <taxon>Lactobacillaceae</taxon>
        <taxon>Lactobacillus</taxon>
    </lineage>
</organism>